<accession>B5ZV69</accession>
<sequence length="222" mass="23856">MKPDIKICGLKTPEAIDRALERGATHIGFIFFEKSPRYIEPDLAGKLAEPARGKAKIVAVVVDPSNDELDEIVSLLKPDILQLHGNESPEHVLTIKALYGLPVMKVFSVRTADDLKRVEAYIGIADRFLFDAKAPKGSELPGGNGISFDWSLLSWLDGSIDYMLSGGLNKDNVADALVKTKARGIDVSSGVETAPGVKSVAMIDEFFDAVEEADAPVMASGS</sequence>
<gene>
    <name evidence="1" type="primary">trpF</name>
    <name type="ordered locus">Rleg2_3953</name>
</gene>
<name>TRPF_RHILW</name>
<proteinExistence type="inferred from homology"/>
<evidence type="ECO:0000255" key="1">
    <source>
        <dbReference type="HAMAP-Rule" id="MF_00135"/>
    </source>
</evidence>
<comment type="catalytic activity">
    <reaction evidence="1">
        <text>N-(5-phospho-beta-D-ribosyl)anthranilate = 1-(2-carboxyphenylamino)-1-deoxy-D-ribulose 5-phosphate</text>
        <dbReference type="Rhea" id="RHEA:21540"/>
        <dbReference type="ChEBI" id="CHEBI:18277"/>
        <dbReference type="ChEBI" id="CHEBI:58613"/>
        <dbReference type="EC" id="5.3.1.24"/>
    </reaction>
</comment>
<comment type="pathway">
    <text evidence="1">Amino-acid biosynthesis; L-tryptophan biosynthesis; L-tryptophan from chorismate: step 3/5.</text>
</comment>
<comment type="similarity">
    <text evidence="1">Belongs to the TrpF family.</text>
</comment>
<feature type="chain" id="PRO_1000095935" description="N-(5'-phosphoribosyl)anthranilate isomerase">
    <location>
        <begin position="1"/>
        <end position="222"/>
    </location>
</feature>
<organism>
    <name type="scientific">Rhizobium leguminosarum bv. trifolii (strain WSM2304)</name>
    <dbReference type="NCBI Taxonomy" id="395492"/>
    <lineage>
        <taxon>Bacteria</taxon>
        <taxon>Pseudomonadati</taxon>
        <taxon>Pseudomonadota</taxon>
        <taxon>Alphaproteobacteria</taxon>
        <taxon>Hyphomicrobiales</taxon>
        <taxon>Rhizobiaceae</taxon>
        <taxon>Rhizobium/Agrobacterium group</taxon>
        <taxon>Rhizobium</taxon>
    </lineage>
</organism>
<keyword id="KW-0028">Amino-acid biosynthesis</keyword>
<keyword id="KW-0057">Aromatic amino acid biosynthesis</keyword>
<keyword id="KW-0413">Isomerase</keyword>
<keyword id="KW-1185">Reference proteome</keyword>
<keyword id="KW-0822">Tryptophan biosynthesis</keyword>
<dbReference type="EC" id="5.3.1.24" evidence="1"/>
<dbReference type="EMBL" id="CP001191">
    <property type="protein sequence ID" value="ACI57215.1"/>
    <property type="molecule type" value="Genomic_DNA"/>
</dbReference>
<dbReference type="RefSeq" id="WP_012559404.1">
    <property type="nucleotide sequence ID" value="NC_011369.1"/>
</dbReference>
<dbReference type="SMR" id="B5ZV69"/>
<dbReference type="STRING" id="395492.Rleg2_3953"/>
<dbReference type="KEGG" id="rlt:Rleg2_3953"/>
<dbReference type="eggNOG" id="COG0135">
    <property type="taxonomic scope" value="Bacteria"/>
</dbReference>
<dbReference type="HOGENOM" id="CLU_076364_1_1_5"/>
<dbReference type="UniPathway" id="UPA00035">
    <property type="reaction ID" value="UER00042"/>
</dbReference>
<dbReference type="Proteomes" id="UP000008330">
    <property type="component" value="Chromosome"/>
</dbReference>
<dbReference type="GO" id="GO:0004640">
    <property type="term" value="F:phosphoribosylanthranilate isomerase activity"/>
    <property type="evidence" value="ECO:0007669"/>
    <property type="project" value="UniProtKB-UniRule"/>
</dbReference>
<dbReference type="GO" id="GO:0000162">
    <property type="term" value="P:L-tryptophan biosynthetic process"/>
    <property type="evidence" value="ECO:0007669"/>
    <property type="project" value="UniProtKB-UniRule"/>
</dbReference>
<dbReference type="CDD" id="cd00405">
    <property type="entry name" value="PRAI"/>
    <property type="match status" value="1"/>
</dbReference>
<dbReference type="Gene3D" id="3.20.20.70">
    <property type="entry name" value="Aldolase class I"/>
    <property type="match status" value="1"/>
</dbReference>
<dbReference type="HAMAP" id="MF_00135">
    <property type="entry name" value="PRAI"/>
    <property type="match status" value="1"/>
</dbReference>
<dbReference type="InterPro" id="IPR013785">
    <property type="entry name" value="Aldolase_TIM"/>
</dbReference>
<dbReference type="InterPro" id="IPR001240">
    <property type="entry name" value="PRAI_dom"/>
</dbReference>
<dbReference type="InterPro" id="IPR011060">
    <property type="entry name" value="RibuloseP-bd_barrel"/>
</dbReference>
<dbReference type="InterPro" id="IPR044643">
    <property type="entry name" value="TrpF_fam"/>
</dbReference>
<dbReference type="NCBIfam" id="NF002295">
    <property type="entry name" value="PRK01222.1-1"/>
    <property type="match status" value="1"/>
</dbReference>
<dbReference type="PANTHER" id="PTHR42894">
    <property type="entry name" value="N-(5'-PHOSPHORIBOSYL)ANTHRANILATE ISOMERASE"/>
    <property type="match status" value="1"/>
</dbReference>
<dbReference type="PANTHER" id="PTHR42894:SF1">
    <property type="entry name" value="N-(5'-PHOSPHORIBOSYL)ANTHRANILATE ISOMERASE"/>
    <property type="match status" value="1"/>
</dbReference>
<dbReference type="Pfam" id="PF00697">
    <property type="entry name" value="PRAI"/>
    <property type="match status" value="1"/>
</dbReference>
<dbReference type="SUPFAM" id="SSF51366">
    <property type="entry name" value="Ribulose-phoshate binding barrel"/>
    <property type="match status" value="1"/>
</dbReference>
<protein>
    <recommendedName>
        <fullName evidence="1">N-(5'-phosphoribosyl)anthranilate isomerase</fullName>
        <shortName evidence="1">PRAI</shortName>
        <ecNumber evidence="1">5.3.1.24</ecNumber>
    </recommendedName>
</protein>
<reference key="1">
    <citation type="journal article" date="2010" name="Stand. Genomic Sci.">
        <title>Complete genome sequence of Rhizobium leguminosarum bv trifolii strain WSM2304, an effective microsymbiont of the South American clover Trifolium polymorphum.</title>
        <authorList>
            <person name="Reeve W."/>
            <person name="O'Hara G."/>
            <person name="Chain P."/>
            <person name="Ardley J."/>
            <person name="Brau L."/>
            <person name="Nandesena K."/>
            <person name="Tiwari R."/>
            <person name="Malfatti S."/>
            <person name="Kiss H."/>
            <person name="Lapidus A."/>
            <person name="Copeland A."/>
            <person name="Nolan M."/>
            <person name="Land M."/>
            <person name="Ivanova N."/>
            <person name="Mavromatis K."/>
            <person name="Markowitz V."/>
            <person name="Kyrpides N."/>
            <person name="Melino V."/>
            <person name="Denton M."/>
            <person name="Yates R."/>
            <person name="Howieson J."/>
        </authorList>
    </citation>
    <scope>NUCLEOTIDE SEQUENCE [LARGE SCALE GENOMIC DNA]</scope>
    <source>
        <strain>WSM2304</strain>
    </source>
</reference>